<proteinExistence type="evidence at protein level"/>
<reference key="1">
    <citation type="journal article" date="1995" name="Science">
        <title>Whole-genome random sequencing and assembly of Haemophilus influenzae Rd.</title>
        <authorList>
            <person name="Fleischmann R.D."/>
            <person name="Adams M.D."/>
            <person name="White O."/>
            <person name="Clayton R.A."/>
            <person name="Kirkness E.F."/>
            <person name="Kerlavage A.R."/>
            <person name="Bult C.J."/>
            <person name="Tomb J.-F."/>
            <person name="Dougherty B.A."/>
            <person name="Merrick J.M."/>
            <person name="McKenney K."/>
            <person name="Sutton G.G."/>
            <person name="FitzHugh W."/>
            <person name="Fields C.A."/>
            <person name="Gocayne J.D."/>
            <person name="Scott J.D."/>
            <person name="Shirley R."/>
            <person name="Liu L.-I."/>
            <person name="Glodek A."/>
            <person name="Kelley J.M."/>
            <person name="Weidman J.F."/>
            <person name="Phillips C.A."/>
            <person name="Spriggs T."/>
            <person name="Hedblom E."/>
            <person name="Cotton M.D."/>
            <person name="Utterback T.R."/>
            <person name="Hanna M.C."/>
            <person name="Nguyen D.T."/>
            <person name="Saudek D.M."/>
            <person name="Brandon R.C."/>
            <person name="Fine L.D."/>
            <person name="Fritchman J.L."/>
            <person name="Fuhrmann J.L."/>
            <person name="Geoghagen N.S.M."/>
            <person name="Gnehm C.L."/>
            <person name="McDonald L.A."/>
            <person name="Small K.V."/>
            <person name="Fraser C.M."/>
            <person name="Smith H.O."/>
            <person name="Venter J.C."/>
        </authorList>
    </citation>
    <scope>NUCLEOTIDE SEQUENCE [LARGE SCALE GENOMIC DNA]</scope>
    <source>
        <strain>ATCC 51907 / DSM 11121 / KW20 / Rd</strain>
    </source>
</reference>
<reference key="2">
    <citation type="journal article" date="2005" name="Proteins">
        <title>Structural analysis of a set of proteins resulting from a bacterial genomics project.</title>
        <authorList>
            <person name="Badger J."/>
            <person name="Sauder J.M."/>
            <person name="Adams J.M."/>
            <person name="Antonysamy S."/>
            <person name="Bain K."/>
            <person name="Bergseid M.G."/>
            <person name="Buchanan S.G."/>
            <person name="Buchanan M.D."/>
            <person name="Batiyenko Y."/>
            <person name="Christopher J.A."/>
            <person name="Emtage S."/>
            <person name="Eroshkina A."/>
            <person name="Feil I."/>
            <person name="Furlong E.B."/>
            <person name="Gajiwala K.S."/>
            <person name="Gao X."/>
            <person name="He D."/>
            <person name="Hendle J."/>
            <person name="Huber A."/>
            <person name="Hoda K."/>
            <person name="Kearins P."/>
            <person name="Kissinger C."/>
            <person name="Laubert B."/>
            <person name="Lewis H.A."/>
            <person name="Lin J."/>
            <person name="Loomis K."/>
            <person name="Lorimer D."/>
            <person name="Louie G."/>
            <person name="Maletic M."/>
            <person name="Marsh C.D."/>
            <person name="Miller I."/>
            <person name="Molinari J."/>
            <person name="Muller-Dieckmann H.J."/>
            <person name="Newman J.M."/>
            <person name="Noland B.W."/>
            <person name="Pagarigan B."/>
            <person name="Park F."/>
            <person name="Peat T.S."/>
            <person name="Post K.W."/>
            <person name="Radojicic S."/>
            <person name="Ramos A."/>
            <person name="Romero R."/>
            <person name="Rutter M.E."/>
            <person name="Sanderson W.E."/>
            <person name="Schwinn K.D."/>
            <person name="Tresser J."/>
            <person name="Winhoven J."/>
            <person name="Wright T.A."/>
            <person name="Wu L."/>
            <person name="Xu J."/>
            <person name="Harris T.J.R."/>
        </authorList>
    </citation>
    <scope>X-RAY CRYSTALLOGRAPHY (1.89 ANGSTROMS) OF 2-212</scope>
</reference>
<feature type="chain" id="PRO_0000201041" description="2-dehydro-3-deoxy-phosphogluconate aldolase">
    <location>
        <begin position="1"/>
        <end position="212"/>
    </location>
</feature>
<feature type="active site" description="Proton acceptor" evidence="1">
    <location>
        <position position="45"/>
    </location>
</feature>
<feature type="active site" description="Schiff-base intermediate with substrate" evidence="1">
    <location>
        <position position="133"/>
    </location>
</feature>
<feature type="binding site" evidence="1">
    <location>
        <position position="49"/>
    </location>
    <ligand>
        <name>pyruvate</name>
        <dbReference type="ChEBI" id="CHEBI:15361"/>
    </ligand>
</feature>
<feature type="binding site" evidence="1">
    <location>
        <position position="73"/>
    </location>
    <ligand>
        <name>pyruvate</name>
        <dbReference type="ChEBI" id="CHEBI:15361"/>
    </ligand>
</feature>
<feature type="binding site" description="covalent" evidence="1">
    <location>
        <position position="133"/>
    </location>
    <ligand>
        <name>pyruvate</name>
        <dbReference type="ChEBI" id="CHEBI:15361"/>
    </ligand>
</feature>
<feature type="site" description="Plays a major role in determining the stereoselectivity" evidence="1">
    <location>
        <position position="161"/>
    </location>
</feature>
<feature type="helix" evidence="3">
    <location>
        <begin position="5"/>
        <end position="15"/>
    </location>
</feature>
<feature type="strand" evidence="3">
    <location>
        <begin position="17"/>
        <end position="21"/>
    </location>
</feature>
<feature type="helix" evidence="3">
    <location>
        <begin position="26"/>
        <end position="28"/>
    </location>
</feature>
<feature type="helix" evidence="3">
    <location>
        <begin position="29"/>
        <end position="38"/>
    </location>
</feature>
<feature type="strand" evidence="3">
    <location>
        <begin position="43"/>
        <end position="47"/>
    </location>
</feature>
<feature type="helix" evidence="3">
    <location>
        <begin position="53"/>
        <end position="63"/>
    </location>
</feature>
<feature type="strand" evidence="3">
    <location>
        <begin position="68"/>
        <end position="73"/>
    </location>
</feature>
<feature type="helix" evidence="3">
    <location>
        <begin position="77"/>
        <end position="86"/>
    </location>
</feature>
<feature type="strand" evidence="3">
    <location>
        <begin position="89"/>
        <end position="92"/>
    </location>
</feature>
<feature type="helix" evidence="3">
    <location>
        <begin position="98"/>
        <end position="106"/>
    </location>
</feature>
<feature type="helix" evidence="3">
    <location>
        <begin position="118"/>
        <end position="126"/>
    </location>
</feature>
<feature type="strand" evidence="3">
    <location>
        <begin position="131"/>
        <end position="134"/>
    </location>
</feature>
<feature type="turn" evidence="3">
    <location>
        <begin position="135"/>
        <end position="141"/>
    </location>
</feature>
<feature type="helix" evidence="3">
    <location>
        <begin position="142"/>
        <end position="150"/>
    </location>
</feature>
<feature type="turn" evidence="3">
    <location>
        <begin position="151"/>
        <end position="155"/>
    </location>
</feature>
<feature type="strand" evidence="3">
    <location>
        <begin position="157"/>
        <end position="163"/>
    </location>
</feature>
<feature type="turn" evidence="3">
    <location>
        <begin position="166"/>
        <end position="168"/>
    </location>
</feature>
<feature type="helix" evidence="3">
    <location>
        <begin position="169"/>
        <end position="173"/>
    </location>
</feature>
<feature type="strand" evidence="3">
    <location>
        <begin position="181"/>
        <end position="183"/>
    </location>
</feature>
<feature type="helix" evidence="3">
    <location>
        <begin position="185"/>
        <end position="187"/>
    </location>
</feature>
<feature type="helix" evidence="3">
    <location>
        <begin position="189"/>
        <end position="193"/>
    </location>
</feature>
<feature type="helix" evidence="3">
    <location>
        <begin position="197"/>
        <end position="211"/>
    </location>
</feature>
<evidence type="ECO:0000250" key="1">
    <source>
        <dbReference type="UniProtKB" id="P0A955"/>
    </source>
</evidence>
<evidence type="ECO:0000305" key="2"/>
<evidence type="ECO:0007829" key="3">
    <source>
        <dbReference type="PDB" id="1VHC"/>
    </source>
</evidence>
<name>ALKD_HAEIN</name>
<sequence length="212" mass="22861">MSYTTQQIIEKLRELKIVPVIALDNADDILPLADTLAKNGLSVAEITFRSEAAADAIRLLRANRPDFLIAAGTVLTAEQVVLAKSSGADFVVTPGLNPKIVKLCQDLNFPITPGVNNPMAIEIALEMGISAVKFFPAEASGGVKMIKALLGPYAQLQIMPTGGIGLHNIRDYLAIPNIVACGGSWFVEKKLIQSNNWDEIGRLVREVIDIIK</sequence>
<dbReference type="EC" id="4.1.2.14" evidence="1"/>
<dbReference type="EMBL" id="L42023">
    <property type="protein sequence ID" value="AAC21725.1"/>
    <property type="molecule type" value="Genomic_DNA"/>
</dbReference>
<dbReference type="PIR" id="A64045">
    <property type="entry name" value="A64045"/>
</dbReference>
<dbReference type="RefSeq" id="NP_438220.1">
    <property type="nucleotide sequence ID" value="NC_000907.1"/>
</dbReference>
<dbReference type="PDB" id="1VHC">
    <property type="method" value="X-ray"/>
    <property type="resolution" value="1.89 A"/>
    <property type="chains" value="A/B/C/D/E/F=2-212"/>
</dbReference>
<dbReference type="PDBsum" id="1VHC"/>
<dbReference type="SMR" id="P44480"/>
<dbReference type="STRING" id="71421.HI_0047"/>
<dbReference type="EnsemblBacteria" id="AAC21725">
    <property type="protein sequence ID" value="AAC21725"/>
    <property type="gene ID" value="HI_0047"/>
</dbReference>
<dbReference type="KEGG" id="hin:HI_0047"/>
<dbReference type="PATRIC" id="fig|71421.8.peg.47"/>
<dbReference type="eggNOG" id="COG0800">
    <property type="taxonomic scope" value="Bacteria"/>
</dbReference>
<dbReference type="HOGENOM" id="CLU_077795_1_1_6"/>
<dbReference type="OrthoDB" id="9805177at2"/>
<dbReference type="PhylomeDB" id="P44480"/>
<dbReference type="BioCyc" id="HINF71421:G1GJ1-48-MONOMER"/>
<dbReference type="UniPathway" id="UPA00856">
    <property type="reaction ID" value="UER00829"/>
</dbReference>
<dbReference type="EvolutionaryTrace" id="P44480"/>
<dbReference type="Proteomes" id="UP000000579">
    <property type="component" value="Chromosome"/>
</dbReference>
<dbReference type="GO" id="GO:0005737">
    <property type="term" value="C:cytoplasm"/>
    <property type="evidence" value="ECO:0007669"/>
    <property type="project" value="UniProtKB-SubCell"/>
</dbReference>
<dbReference type="GO" id="GO:0106009">
    <property type="term" value="F:(4S)-4-hydroxy-2-oxoglutarate aldolase activity"/>
    <property type="evidence" value="ECO:0000318"/>
    <property type="project" value="GO_Central"/>
</dbReference>
<dbReference type="GO" id="GO:0008700">
    <property type="term" value="F:(R,S)-4-hydroxy-2-oxoglutarate aldolase activity"/>
    <property type="evidence" value="ECO:0007669"/>
    <property type="project" value="UniProtKB-EC"/>
</dbReference>
<dbReference type="GO" id="GO:0008675">
    <property type="term" value="F:2-dehydro-3-deoxy-phosphogluconate aldolase activity"/>
    <property type="evidence" value="ECO:0007669"/>
    <property type="project" value="UniProtKB-EC"/>
</dbReference>
<dbReference type="GO" id="GO:0016832">
    <property type="term" value="F:aldehyde-lyase activity"/>
    <property type="evidence" value="ECO:0000318"/>
    <property type="project" value="GO_Central"/>
</dbReference>
<dbReference type="GO" id="GO:0009255">
    <property type="term" value="P:Entner-Doudoroff pathway through 6-phosphogluconate"/>
    <property type="evidence" value="ECO:0000318"/>
    <property type="project" value="GO_Central"/>
</dbReference>
<dbReference type="CDD" id="cd00452">
    <property type="entry name" value="KDPG_aldolase"/>
    <property type="match status" value="1"/>
</dbReference>
<dbReference type="Gene3D" id="3.20.20.70">
    <property type="entry name" value="Aldolase class I"/>
    <property type="match status" value="1"/>
</dbReference>
<dbReference type="InterPro" id="IPR000887">
    <property type="entry name" value="Aldlse_KDPG_KHG"/>
</dbReference>
<dbReference type="InterPro" id="IPR013785">
    <property type="entry name" value="Aldolase_TIM"/>
</dbReference>
<dbReference type="InterPro" id="IPR031337">
    <property type="entry name" value="KDPG/KHG_AS_1"/>
</dbReference>
<dbReference type="InterPro" id="IPR031338">
    <property type="entry name" value="KDPG/KHG_AS_2"/>
</dbReference>
<dbReference type="NCBIfam" id="TIGR01182">
    <property type="entry name" value="eda"/>
    <property type="match status" value="1"/>
</dbReference>
<dbReference type="NCBIfam" id="NF004325">
    <property type="entry name" value="PRK05718.1"/>
    <property type="match status" value="1"/>
</dbReference>
<dbReference type="PANTHER" id="PTHR30246:SF1">
    <property type="entry name" value="2-DEHYDRO-3-DEOXY-6-PHOSPHOGALACTONATE ALDOLASE-RELATED"/>
    <property type="match status" value="1"/>
</dbReference>
<dbReference type="PANTHER" id="PTHR30246">
    <property type="entry name" value="2-KETO-3-DEOXY-6-PHOSPHOGLUCONATE ALDOLASE"/>
    <property type="match status" value="1"/>
</dbReference>
<dbReference type="Pfam" id="PF01081">
    <property type="entry name" value="Aldolase"/>
    <property type="match status" value="1"/>
</dbReference>
<dbReference type="SUPFAM" id="SSF51569">
    <property type="entry name" value="Aldolase"/>
    <property type="match status" value="1"/>
</dbReference>
<dbReference type="PROSITE" id="PS00159">
    <property type="entry name" value="ALDOLASE_KDPG_KHG_1"/>
    <property type="match status" value="1"/>
</dbReference>
<dbReference type="PROSITE" id="PS00160">
    <property type="entry name" value="ALDOLASE_KDPG_KHG_2"/>
    <property type="match status" value="1"/>
</dbReference>
<comment type="function">
    <text evidence="1">Involved in the degradation of glucose via the Entner-Doudoroff pathway (By similarity). Catalyzes the reversible, stereospecific retro-aldol cleavage of 2-keto-3-deoxy-6-phosphogluconate (KDPG) to pyruvate and D-glyceraldehyde-3-phosphate (By similarity).</text>
</comment>
<comment type="catalytic activity">
    <reaction evidence="1">
        <text>2-dehydro-3-deoxy-6-phospho-D-gluconate = D-glyceraldehyde 3-phosphate + pyruvate</text>
        <dbReference type="Rhea" id="RHEA:17089"/>
        <dbReference type="ChEBI" id="CHEBI:15361"/>
        <dbReference type="ChEBI" id="CHEBI:57569"/>
        <dbReference type="ChEBI" id="CHEBI:59776"/>
        <dbReference type="EC" id="4.1.2.14"/>
    </reaction>
</comment>
<comment type="pathway">
    <text>Carbohydrate acid metabolism; 2-dehydro-3-deoxy-D-gluconate degradation; D-glyceraldehyde 3-phosphate and pyruvate from 2-dehydro-3-deoxy-D-gluconate: step 2/2.</text>
</comment>
<comment type="subunit">
    <text evidence="1">Homotrimer.</text>
</comment>
<comment type="subcellular location">
    <subcellularLocation>
        <location evidence="1">Cytoplasm</location>
    </subcellularLocation>
</comment>
<comment type="similarity">
    <text evidence="2">Belongs to the KHG/KDPG aldolase family.</text>
</comment>
<organism>
    <name type="scientific">Haemophilus influenzae (strain ATCC 51907 / DSM 11121 / KW20 / Rd)</name>
    <dbReference type="NCBI Taxonomy" id="71421"/>
    <lineage>
        <taxon>Bacteria</taxon>
        <taxon>Pseudomonadati</taxon>
        <taxon>Pseudomonadota</taxon>
        <taxon>Gammaproteobacteria</taxon>
        <taxon>Pasteurellales</taxon>
        <taxon>Pasteurellaceae</taxon>
        <taxon>Haemophilus</taxon>
    </lineage>
</organism>
<keyword id="KW-0002">3D-structure</keyword>
<keyword id="KW-0119">Carbohydrate metabolism</keyword>
<keyword id="KW-0963">Cytoplasm</keyword>
<keyword id="KW-0456">Lyase</keyword>
<keyword id="KW-1185">Reference proteome</keyword>
<keyword id="KW-0704">Schiff base</keyword>
<gene>
    <name type="primary">eda</name>
    <name type="ordered locus">HI_0047</name>
</gene>
<accession>P44480</accession>
<protein>
    <recommendedName>
        <fullName evidence="1">2-dehydro-3-deoxy-phosphogluconate aldolase</fullName>
        <ecNumber evidence="1">4.1.2.14</ecNumber>
    </recommendedName>
    <alternativeName>
        <fullName evidence="1">2-keto-3-deoxy-6-phosphogluconate aldolase</fullName>
        <shortName evidence="1">KDPG aldolase</shortName>
    </alternativeName>
</protein>